<organism>
    <name type="scientific">Pseudomonas fluorescens (strain Pf0-1)</name>
    <dbReference type="NCBI Taxonomy" id="205922"/>
    <lineage>
        <taxon>Bacteria</taxon>
        <taxon>Pseudomonadati</taxon>
        <taxon>Pseudomonadota</taxon>
        <taxon>Gammaproteobacteria</taxon>
        <taxon>Pseudomonadales</taxon>
        <taxon>Pseudomonadaceae</taxon>
        <taxon>Pseudomonas</taxon>
    </lineage>
</organism>
<protein>
    <recommendedName>
        <fullName evidence="1">Iron-sulfur cluster assembly protein CyaY</fullName>
    </recommendedName>
</protein>
<reference key="1">
    <citation type="journal article" date="2009" name="Genome Biol.">
        <title>Genomic and genetic analyses of diversity and plant interactions of Pseudomonas fluorescens.</title>
        <authorList>
            <person name="Silby M.W."/>
            <person name="Cerdeno-Tarraga A.M."/>
            <person name="Vernikos G.S."/>
            <person name="Giddens S.R."/>
            <person name="Jackson R.W."/>
            <person name="Preston G.M."/>
            <person name="Zhang X.-X."/>
            <person name="Moon C.D."/>
            <person name="Gehrig S.M."/>
            <person name="Godfrey S.A.C."/>
            <person name="Knight C.G."/>
            <person name="Malone J.G."/>
            <person name="Robinson Z."/>
            <person name="Spiers A.J."/>
            <person name="Harris S."/>
            <person name="Challis G.L."/>
            <person name="Yaxley A.M."/>
            <person name="Harris D."/>
            <person name="Seeger K."/>
            <person name="Murphy L."/>
            <person name="Rutter S."/>
            <person name="Squares R."/>
            <person name="Quail M.A."/>
            <person name="Saunders E."/>
            <person name="Mavromatis K."/>
            <person name="Brettin T.S."/>
            <person name="Bentley S.D."/>
            <person name="Hothersall J."/>
            <person name="Stephens E."/>
            <person name="Thomas C.M."/>
            <person name="Parkhill J."/>
            <person name="Levy S.B."/>
            <person name="Rainey P.B."/>
            <person name="Thomson N.R."/>
        </authorList>
    </citation>
    <scope>NUCLEOTIDE SEQUENCE [LARGE SCALE GENOMIC DNA]</scope>
    <source>
        <strain>Pf0-1</strain>
    </source>
</reference>
<dbReference type="EMBL" id="CP000094">
    <property type="protein sequence ID" value="ABA77233.1"/>
    <property type="molecule type" value="Genomic_DNA"/>
</dbReference>
<dbReference type="RefSeq" id="WP_007951887.1">
    <property type="nucleotide sequence ID" value="NC_007492.2"/>
</dbReference>
<dbReference type="SMR" id="Q3K4S1"/>
<dbReference type="KEGG" id="pfo:Pfl01_5496"/>
<dbReference type="eggNOG" id="COG1965">
    <property type="taxonomic scope" value="Bacteria"/>
</dbReference>
<dbReference type="HOGENOM" id="CLU_080880_3_0_6"/>
<dbReference type="Proteomes" id="UP000002704">
    <property type="component" value="Chromosome"/>
</dbReference>
<dbReference type="GO" id="GO:0005829">
    <property type="term" value="C:cytosol"/>
    <property type="evidence" value="ECO:0007669"/>
    <property type="project" value="TreeGrafter"/>
</dbReference>
<dbReference type="GO" id="GO:0008199">
    <property type="term" value="F:ferric iron binding"/>
    <property type="evidence" value="ECO:0007669"/>
    <property type="project" value="InterPro"/>
</dbReference>
<dbReference type="GO" id="GO:0008198">
    <property type="term" value="F:ferrous iron binding"/>
    <property type="evidence" value="ECO:0007669"/>
    <property type="project" value="TreeGrafter"/>
</dbReference>
<dbReference type="GO" id="GO:0016226">
    <property type="term" value="P:iron-sulfur cluster assembly"/>
    <property type="evidence" value="ECO:0007669"/>
    <property type="project" value="UniProtKB-UniRule"/>
</dbReference>
<dbReference type="Gene3D" id="3.30.920.10">
    <property type="entry name" value="Frataxin/CyaY"/>
    <property type="match status" value="1"/>
</dbReference>
<dbReference type="HAMAP" id="MF_00142">
    <property type="entry name" value="CyaY"/>
    <property type="match status" value="1"/>
</dbReference>
<dbReference type="InterPro" id="IPR047584">
    <property type="entry name" value="CyaY"/>
</dbReference>
<dbReference type="InterPro" id="IPR002908">
    <property type="entry name" value="Frataxin/CyaY"/>
</dbReference>
<dbReference type="InterPro" id="IPR036524">
    <property type="entry name" value="Frataxin/CyaY_sf"/>
</dbReference>
<dbReference type="InterPro" id="IPR020895">
    <property type="entry name" value="Frataxin_CS"/>
</dbReference>
<dbReference type="NCBIfam" id="TIGR03421">
    <property type="entry name" value="FeS_CyaY"/>
    <property type="match status" value="1"/>
</dbReference>
<dbReference type="PANTHER" id="PTHR16821">
    <property type="entry name" value="FRATAXIN"/>
    <property type="match status" value="1"/>
</dbReference>
<dbReference type="PANTHER" id="PTHR16821:SF2">
    <property type="entry name" value="FRATAXIN, MITOCHONDRIAL"/>
    <property type="match status" value="1"/>
</dbReference>
<dbReference type="Pfam" id="PF01491">
    <property type="entry name" value="Frataxin_Cyay"/>
    <property type="match status" value="1"/>
</dbReference>
<dbReference type="SMART" id="SM01219">
    <property type="entry name" value="Frataxin_Cyay"/>
    <property type="match status" value="1"/>
</dbReference>
<dbReference type="SUPFAM" id="SSF55387">
    <property type="entry name" value="Frataxin/Nqo15-like"/>
    <property type="match status" value="1"/>
</dbReference>
<dbReference type="PROSITE" id="PS01344">
    <property type="entry name" value="FRATAXIN_1"/>
    <property type="match status" value="1"/>
</dbReference>
<dbReference type="PROSITE" id="PS50810">
    <property type="entry name" value="FRATAXIN_2"/>
    <property type="match status" value="1"/>
</dbReference>
<feature type="chain" id="PRO_1000010943" description="Iron-sulfur cluster assembly protein CyaY">
    <location>
        <begin position="1"/>
        <end position="110"/>
    </location>
</feature>
<name>CYAY_PSEPF</name>
<accession>Q3K4S1</accession>
<evidence type="ECO:0000255" key="1">
    <source>
        <dbReference type="HAMAP-Rule" id="MF_00142"/>
    </source>
</evidence>
<sequence>MSLSEARFHDLVDETQEKLEDIFDDSDLDIDMENSAGVLTVKFENGTQLIFSRQEPLRQLWLAAVSGGFHFDYDEESERWMCDKSEEQLGEMLERIVKQQAGTEFDFEGL</sequence>
<comment type="function">
    <text evidence="1">Involved in iron-sulfur (Fe-S) cluster assembly. May act as a regulator of Fe-S biogenesis.</text>
</comment>
<comment type="similarity">
    <text evidence="1">Belongs to the frataxin family.</text>
</comment>
<gene>
    <name evidence="1" type="primary">cyaY</name>
    <name type="ordered locus">Pfl01_5496</name>
</gene>
<proteinExistence type="inferred from homology"/>
<keyword id="KW-0408">Iron</keyword>
<keyword id="KW-0479">Metal-binding</keyword>